<reference key="1">
    <citation type="journal article" date="2005" name="Science">
        <title>The transcriptional landscape of the mammalian genome.</title>
        <authorList>
            <person name="Carninci P."/>
            <person name="Kasukawa T."/>
            <person name="Katayama S."/>
            <person name="Gough J."/>
            <person name="Frith M.C."/>
            <person name="Maeda N."/>
            <person name="Oyama R."/>
            <person name="Ravasi T."/>
            <person name="Lenhard B."/>
            <person name="Wells C."/>
            <person name="Kodzius R."/>
            <person name="Shimokawa K."/>
            <person name="Bajic V.B."/>
            <person name="Brenner S.E."/>
            <person name="Batalov S."/>
            <person name="Forrest A.R."/>
            <person name="Zavolan M."/>
            <person name="Davis M.J."/>
            <person name="Wilming L.G."/>
            <person name="Aidinis V."/>
            <person name="Allen J.E."/>
            <person name="Ambesi-Impiombato A."/>
            <person name="Apweiler R."/>
            <person name="Aturaliya R.N."/>
            <person name="Bailey T.L."/>
            <person name="Bansal M."/>
            <person name="Baxter L."/>
            <person name="Beisel K.W."/>
            <person name="Bersano T."/>
            <person name="Bono H."/>
            <person name="Chalk A.M."/>
            <person name="Chiu K.P."/>
            <person name="Choudhary V."/>
            <person name="Christoffels A."/>
            <person name="Clutterbuck D.R."/>
            <person name="Crowe M.L."/>
            <person name="Dalla E."/>
            <person name="Dalrymple B.P."/>
            <person name="de Bono B."/>
            <person name="Della Gatta G."/>
            <person name="di Bernardo D."/>
            <person name="Down T."/>
            <person name="Engstrom P."/>
            <person name="Fagiolini M."/>
            <person name="Faulkner G."/>
            <person name="Fletcher C.F."/>
            <person name="Fukushima T."/>
            <person name="Furuno M."/>
            <person name="Futaki S."/>
            <person name="Gariboldi M."/>
            <person name="Georgii-Hemming P."/>
            <person name="Gingeras T.R."/>
            <person name="Gojobori T."/>
            <person name="Green R.E."/>
            <person name="Gustincich S."/>
            <person name="Harbers M."/>
            <person name="Hayashi Y."/>
            <person name="Hensch T.K."/>
            <person name="Hirokawa N."/>
            <person name="Hill D."/>
            <person name="Huminiecki L."/>
            <person name="Iacono M."/>
            <person name="Ikeo K."/>
            <person name="Iwama A."/>
            <person name="Ishikawa T."/>
            <person name="Jakt M."/>
            <person name="Kanapin A."/>
            <person name="Katoh M."/>
            <person name="Kawasawa Y."/>
            <person name="Kelso J."/>
            <person name="Kitamura H."/>
            <person name="Kitano H."/>
            <person name="Kollias G."/>
            <person name="Krishnan S.P."/>
            <person name="Kruger A."/>
            <person name="Kummerfeld S.K."/>
            <person name="Kurochkin I.V."/>
            <person name="Lareau L.F."/>
            <person name="Lazarevic D."/>
            <person name="Lipovich L."/>
            <person name="Liu J."/>
            <person name="Liuni S."/>
            <person name="McWilliam S."/>
            <person name="Madan Babu M."/>
            <person name="Madera M."/>
            <person name="Marchionni L."/>
            <person name="Matsuda H."/>
            <person name="Matsuzawa S."/>
            <person name="Miki H."/>
            <person name="Mignone F."/>
            <person name="Miyake S."/>
            <person name="Morris K."/>
            <person name="Mottagui-Tabar S."/>
            <person name="Mulder N."/>
            <person name="Nakano N."/>
            <person name="Nakauchi H."/>
            <person name="Ng P."/>
            <person name="Nilsson R."/>
            <person name="Nishiguchi S."/>
            <person name="Nishikawa S."/>
            <person name="Nori F."/>
            <person name="Ohara O."/>
            <person name="Okazaki Y."/>
            <person name="Orlando V."/>
            <person name="Pang K.C."/>
            <person name="Pavan W.J."/>
            <person name="Pavesi G."/>
            <person name="Pesole G."/>
            <person name="Petrovsky N."/>
            <person name="Piazza S."/>
            <person name="Reed J."/>
            <person name="Reid J.F."/>
            <person name="Ring B.Z."/>
            <person name="Ringwald M."/>
            <person name="Rost B."/>
            <person name="Ruan Y."/>
            <person name="Salzberg S.L."/>
            <person name="Sandelin A."/>
            <person name="Schneider C."/>
            <person name="Schoenbach C."/>
            <person name="Sekiguchi K."/>
            <person name="Semple C.A."/>
            <person name="Seno S."/>
            <person name="Sessa L."/>
            <person name="Sheng Y."/>
            <person name="Shibata Y."/>
            <person name="Shimada H."/>
            <person name="Shimada K."/>
            <person name="Silva D."/>
            <person name="Sinclair B."/>
            <person name="Sperling S."/>
            <person name="Stupka E."/>
            <person name="Sugiura K."/>
            <person name="Sultana R."/>
            <person name="Takenaka Y."/>
            <person name="Taki K."/>
            <person name="Tammoja K."/>
            <person name="Tan S.L."/>
            <person name="Tang S."/>
            <person name="Taylor M.S."/>
            <person name="Tegner J."/>
            <person name="Teichmann S.A."/>
            <person name="Ueda H.R."/>
            <person name="van Nimwegen E."/>
            <person name="Verardo R."/>
            <person name="Wei C.L."/>
            <person name="Yagi K."/>
            <person name="Yamanishi H."/>
            <person name="Zabarovsky E."/>
            <person name="Zhu S."/>
            <person name="Zimmer A."/>
            <person name="Hide W."/>
            <person name="Bult C."/>
            <person name="Grimmond S.M."/>
            <person name="Teasdale R.D."/>
            <person name="Liu E.T."/>
            <person name="Brusic V."/>
            <person name="Quackenbush J."/>
            <person name="Wahlestedt C."/>
            <person name="Mattick J.S."/>
            <person name="Hume D.A."/>
            <person name="Kai C."/>
            <person name="Sasaki D."/>
            <person name="Tomaru Y."/>
            <person name="Fukuda S."/>
            <person name="Kanamori-Katayama M."/>
            <person name="Suzuki M."/>
            <person name="Aoki J."/>
            <person name="Arakawa T."/>
            <person name="Iida J."/>
            <person name="Imamura K."/>
            <person name="Itoh M."/>
            <person name="Kato T."/>
            <person name="Kawaji H."/>
            <person name="Kawagashira N."/>
            <person name="Kawashima T."/>
            <person name="Kojima M."/>
            <person name="Kondo S."/>
            <person name="Konno H."/>
            <person name="Nakano K."/>
            <person name="Ninomiya N."/>
            <person name="Nishio T."/>
            <person name="Okada M."/>
            <person name="Plessy C."/>
            <person name="Shibata K."/>
            <person name="Shiraki T."/>
            <person name="Suzuki S."/>
            <person name="Tagami M."/>
            <person name="Waki K."/>
            <person name="Watahiki A."/>
            <person name="Okamura-Oho Y."/>
            <person name="Suzuki H."/>
            <person name="Kawai J."/>
            <person name="Hayashizaki Y."/>
        </authorList>
    </citation>
    <scope>NUCLEOTIDE SEQUENCE [LARGE SCALE MRNA]</scope>
    <source>
        <strain>C57BL/6J</strain>
    </source>
</reference>
<reference key="2">
    <citation type="journal article" date="2004" name="Genome Res.">
        <title>The status, quality, and expansion of the NIH full-length cDNA project: the Mammalian Gene Collection (MGC).</title>
        <authorList>
            <consortium name="The MGC Project Team"/>
        </authorList>
    </citation>
    <scope>NUCLEOTIDE SEQUENCE [LARGE SCALE MRNA]</scope>
    <source>
        <strain>FVB/N</strain>
        <tissue>Mammary tumor</tissue>
    </source>
</reference>
<reference key="3">
    <citation type="journal article" date="2010" name="Cell">
        <title>A tissue-specific atlas of mouse protein phosphorylation and expression.</title>
        <authorList>
            <person name="Huttlin E.L."/>
            <person name="Jedrychowski M.P."/>
            <person name="Elias J.E."/>
            <person name="Goswami T."/>
            <person name="Rad R."/>
            <person name="Beausoleil S.A."/>
            <person name="Villen J."/>
            <person name="Haas W."/>
            <person name="Sowa M.E."/>
            <person name="Gygi S.P."/>
        </authorList>
    </citation>
    <scope>PHOSPHORYLATION [LARGE SCALE ANALYSIS] AT SER-102</scope>
    <scope>IDENTIFICATION BY MASS SPECTROMETRY [LARGE SCALE ANALYSIS]</scope>
    <source>
        <tissue>Testis</tissue>
    </source>
</reference>
<accession>Q8VCE4</accession>
<accession>Q8BJJ5</accession>
<proteinExistence type="evidence at protein level"/>
<name>CI040_MOUSE</name>
<organism>
    <name type="scientific">Mus musculus</name>
    <name type="common">Mouse</name>
    <dbReference type="NCBI Taxonomy" id="10090"/>
    <lineage>
        <taxon>Eukaryota</taxon>
        <taxon>Metazoa</taxon>
        <taxon>Chordata</taxon>
        <taxon>Craniata</taxon>
        <taxon>Vertebrata</taxon>
        <taxon>Euteleostomi</taxon>
        <taxon>Mammalia</taxon>
        <taxon>Eutheria</taxon>
        <taxon>Euarchontoglires</taxon>
        <taxon>Glires</taxon>
        <taxon>Rodentia</taxon>
        <taxon>Myomorpha</taxon>
        <taxon>Muroidea</taxon>
        <taxon>Muridae</taxon>
        <taxon>Murinae</taxon>
        <taxon>Mus</taxon>
        <taxon>Mus</taxon>
    </lineage>
</organism>
<dbReference type="EMBL" id="AK083631">
    <property type="protein sequence ID" value="BAC38973.1"/>
    <property type="molecule type" value="mRNA"/>
</dbReference>
<dbReference type="EMBL" id="BC020125">
    <property type="protein sequence ID" value="AAH20125.1"/>
    <property type="molecule type" value="mRNA"/>
</dbReference>
<dbReference type="RefSeq" id="NP_001361059.1">
    <property type="nucleotide sequence ID" value="NM_001374130.1"/>
</dbReference>
<dbReference type="RefSeq" id="NP_808308.1">
    <property type="nucleotide sequence ID" value="NM_177640.4"/>
</dbReference>
<dbReference type="FunCoup" id="Q8VCE4">
    <property type="interactions" value="89"/>
</dbReference>
<dbReference type="IntAct" id="Q8VCE4">
    <property type="interactions" value="1"/>
</dbReference>
<dbReference type="STRING" id="10090.ENSMUSP00000061933"/>
<dbReference type="iPTMnet" id="Q8VCE4"/>
<dbReference type="PhosphoSitePlus" id="Q8VCE4"/>
<dbReference type="PaxDb" id="10090-ENSMUSP00000108465"/>
<dbReference type="Pumba" id="Q8VCE4"/>
<dbReference type="Antibodypedia" id="43431">
    <property type="antibodies" value="60 antibodies from 13 providers"/>
</dbReference>
<dbReference type="Ensembl" id="ENSMUST00000062753.3">
    <property type="protein sequence ID" value="ENSMUSP00000108465.2"/>
    <property type="gene ID" value="ENSMUSG00000047044.8"/>
</dbReference>
<dbReference type="GeneID" id="225995"/>
<dbReference type="KEGG" id="mmu:225995"/>
<dbReference type="UCSC" id="uc008gxz.1">
    <property type="organism name" value="mouse"/>
</dbReference>
<dbReference type="AGR" id="MGI:3583960"/>
<dbReference type="MGI" id="MGI:3583960">
    <property type="gene designation" value="D030056L22Rik"/>
</dbReference>
<dbReference type="VEuPathDB" id="HostDB:ENSMUSG00000047044"/>
<dbReference type="eggNOG" id="ENOG502SEFF">
    <property type="taxonomic scope" value="Eukaryota"/>
</dbReference>
<dbReference type="GeneTree" id="ENSGT00390000001325"/>
<dbReference type="HOGENOM" id="CLU_117698_1_0_1"/>
<dbReference type="InParanoid" id="Q8VCE4"/>
<dbReference type="OMA" id="QLNEEFW"/>
<dbReference type="OrthoDB" id="8960251at2759"/>
<dbReference type="PhylomeDB" id="Q8VCE4"/>
<dbReference type="TreeFam" id="TF338442"/>
<dbReference type="BioGRID-ORCS" id="225995">
    <property type="hits" value="3 hits in 76 CRISPR screens"/>
</dbReference>
<dbReference type="PRO" id="PR:Q8VCE4"/>
<dbReference type="Proteomes" id="UP000000589">
    <property type="component" value="Chromosome 19"/>
</dbReference>
<dbReference type="RNAct" id="Q8VCE4">
    <property type="molecule type" value="protein"/>
</dbReference>
<dbReference type="Bgee" id="ENSMUSG00000047044">
    <property type="expression patterns" value="Expressed in rostral migratory stream and 256 other cell types or tissues"/>
</dbReference>
<dbReference type="ExpressionAtlas" id="Q8VCE4">
    <property type="expression patterns" value="baseline and differential"/>
</dbReference>
<dbReference type="InterPro" id="IPR042349">
    <property type="entry name" value="C9orf40-like"/>
</dbReference>
<dbReference type="InterPro" id="IPR033461">
    <property type="entry name" value="WRNPLPNID"/>
</dbReference>
<dbReference type="PANTHER" id="PTHR16003">
    <property type="entry name" value="C9ORF40 ISOFORM 1"/>
    <property type="match status" value="1"/>
</dbReference>
<dbReference type="PANTHER" id="PTHR16003:SF3">
    <property type="entry name" value="CHROMOSOME 9 C9ORF40 HOMOLOG"/>
    <property type="match status" value="1"/>
</dbReference>
<dbReference type="Pfam" id="PF15017">
    <property type="entry name" value="WRNPLPNID"/>
    <property type="match status" value="1"/>
</dbReference>
<feature type="chain" id="PRO_0000089683" description="Uncharacterized protein C9orf40 homolog">
    <location>
        <begin position="1"/>
        <end position="163"/>
    </location>
</feature>
<feature type="region of interest" description="Disordered" evidence="1">
    <location>
        <begin position="23"/>
        <end position="113"/>
    </location>
</feature>
<feature type="modified residue" description="Phosphoserine" evidence="3">
    <location>
        <position position="102"/>
    </location>
</feature>
<feature type="sequence conflict" description="In Ref. 1; BAC38973." evidence="2" ref="1">
    <location>
        <position position="112"/>
    </location>
</feature>
<evidence type="ECO:0000256" key="1">
    <source>
        <dbReference type="SAM" id="MobiDB-lite"/>
    </source>
</evidence>
<evidence type="ECO:0000305" key="2"/>
<evidence type="ECO:0007744" key="3">
    <source>
    </source>
</evidence>
<keyword id="KW-0597">Phosphoprotein</keyword>
<keyword id="KW-1185">Reference proteome</keyword>
<protein>
    <recommendedName>
        <fullName>Uncharacterized protein C9orf40 homolog</fullName>
    </recommendedName>
</protein>
<sequence>MAKRRAAEPLTFRVPWKRLLLSDFPEEPPLWVPPSGTARPLKRQGDAGIMAEPASAPRKRRGGGDDRQELQGCSREPGEPPPGEQEEPRAAGGGDRVESAGSPQVADGVHSQQPEEFWQYNTFQYWRNPLPPLDLAALEDVSANSLTETLEDKNEGVEIDMES</sequence>